<evidence type="ECO:0000255" key="1">
    <source>
        <dbReference type="HAMAP-Rule" id="MF_00116"/>
    </source>
</evidence>
<comment type="function">
    <text evidence="1">This enzyme is involved in nucleotide metabolism: it produces dUMP, the immediate precursor of thymidine nucleotides and it decreases the intracellular concentration of dUTP so that uracil cannot be incorporated into DNA.</text>
</comment>
<comment type="catalytic activity">
    <reaction evidence="1">
        <text>dUTP + H2O = dUMP + diphosphate + H(+)</text>
        <dbReference type="Rhea" id="RHEA:10248"/>
        <dbReference type="ChEBI" id="CHEBI:15377"/>
        <dbReference type="ChEBI" id="CHEBI:15378"/>
        <dbReference type="ChEBI" id="CHEBI:33019"/>
        <dbReference type="ChEBI" id="CHEBI:61555"/>
        <dbReference type="ChEBI" id="CHEBI:246422"/>
        <dbReference type="EC" id="3.6.1.23"/>
    </reaction>
</comment>
<comment type="cofactor">
    <cofactor evidence="1">
        <name>Mg(2+)</name>
        <dbReference type="ChEBI" id="CHEBI:18420"/>
    </cofactor>
</comment>
<comment type="pathway">
    <text evidence="1">Pyrimidine metabolism; dUMP biosynthesis; dUMP from dCTP (dUTP route): step 2/2.</text>
</comment>
<comment type="similarity">
    <text evidence="1">Belongs to the dUTPase family.</text>
</comment>
<feature type="chain" id="PRO_0000182924" description="Deoxyuridine 5'-triphosphate nucleotidohydrolase">
    <location>
        <begin position="1"/>
        <end position="151"/>
    </location>
</feature>
<feature type="binding site" evidence="1">
    <location>
        <begin position="70"/>
        <end position="72"/>
    </location>
    <ligand>
        <name>substrate</name>
    </ligand>
</feature>
<feature type="binding site" evidence="1">
    <location>
        <position position="83"/>
    </location>
    <ligand>
        <name>substrate</name>
    </ligand>
</feature>
<feature type="binding site" evidence="1">
    <location>
        <begin position="87"/>
        <end position="89"/>
    </location>
    <ligand>
        <name>substrate</name>
    </ligand>
</feature>
<feature type="binding site" evidence="1">
    <location>
        <position position="97"/>
    </location>
    <ligand>
        <name>substrate</name>
    </ligand>
</feature>
<name>DUT_YERPS</name>
<proteinExistence type="inferred from homology"/>
<organism>
    <name type="scientific">Yersinia pseudotuberculosis serotype I (strain IP32953)</name>
    <dbReference type="NCBI Taxonomy" id="273123"/>
    <lineage>
        <taxon>Bacteria</taxon>
        <taxon>Pseudomonadati</taxon>
        <taxon>Pseudomonadota</taxon>
        <taxon>Gammaproteobacteria</taxon>
        <taxon>Enterobacterales</taxon>
        <taxon>Yersiniaceae</taxon>
        <taxon>Yersinia</taxon>
    </lineage>
</organism>
<sequence length="151" mass="16212">MKKIDIKILDPRVGNEFPLPTYATEGSAGLDLRACLDHAVELQPGQTTLLPTGLAIHIGDSALAAVILPRSGLGHKHGIVLGNLVGLIDSDYQGQLMVSVWNRGQQPFTIEPGERIAQMVFVPVVQAEFNLVEDFTDSERGTGGFGHSGRQ</sequence>
<protein>
    <recommendedName>
        <fullName evidence="1">Deoxyuridine 5'-triphosphate nucleotidohydrolase</fullName>
        <shortName evidence="1">dUTPase</shortName>
        <ecNumber evidence="1">3.6.1.23</ecNumber>
    </recommendedName>
    <alternativeName>
        <fullName evidence="1">dUTP pyrophosphatase</fullName>
    </alternativeName>
</protein>
<gene>
    <name evidence="1" type="primary">dut</name>
    <name type="ordered locus">YPTB0044</name>
</gene>
<dbReference type="EC" id="3.6.1.23" evidence="1"/>
<dbReference type="EMBL" id="BX936398">
    <property type="protein sequence ID" value="CAH19284.1"/>
    <property type="molecule type" value="Genomic_DNA"/>
</dbReference>
<dbReference type="SMR" id="Q66GD8"/>
<dbReference type="KEGG" id="yps:YPTB0044"/>
<dbReference type="UniPathway" id="UPA00610">
    <property type="reaction ID" value="UER00666"/>
</dbReference>
<dbReference type="Proteomes" id="UP000001011">
    <property type="component" value="Chromosome"/>
</dbReference>
<dbReference type="GO" id="GO:0004170">
    <property type="term" value="F:dUTP diphosphatase activity"/>
    <property type="evidence" value="ECO:0007669"/>
    <property type="project" value="UniProtKB-UniRule"/>
</dbReference>
<dbReference type="GO" id="GO:0000287">
    <property type="term" value="F:magnesium ion binding"/>
    <property type="evidence" value="ECO:0007669"/>
    <property type="project" value="UniProtKB-UniRule"/>
</dbReference>
<dbReference type="GO" id="GO:0006226">
    <property type="term" value="P:dUMP biosynthetic process"/>
    <property type="evidence" value="ECO:0007669"/>
    <property type="project" value="UniProtKB-UniRule"/>
</dbReference>
<dbReference type="GO" id="GO:0046081">
    <property type="term" value="P:dUTP catabolic process"/>
    <property type="evidence" value="ECO:0007669"/>
    <property type="project" value="InterPro"/>
</dbReference>
<dbReference type="CDD" id="cd07557">
    <property type="entry name" value="trimeric_dUTPase"/>
    <property type="match status" value="1"/>
</dbReference>
<dbReference type="FunFam" id="2.70.40.10:FF:000002">
    <property type="entry name" value="dUTP diphosphatase"/>
    <property type="match status" value="1"/>
</dbReference>
<dbReference type="Gene3D" id="2.70.40.10">
    <property type="match status" value="1"/>
</dbReference>
<dbReference type="HAMAP" id="MF_00116">
    <property type="entry name" value="dUTPase_bact"/>
    <property type="match status" value="1"/>
</dbReference>
<dbReference type="InterPro" id="IPR008181">
    <property type="entry name" value="dUTPase"/>
</dbReference>
<dbReference type="InterPro" id="IPR029054">
    <property type="entry name" value="dUTPase-like"/>
</dbReference>
<dbReference type="InterPro" id="IPR036157">
    <property type="entry name" value="dUTPase-like_sf"/>
</dbReference>
<dbReference type="InterPro" id="IPR033704">
    <property type="entry name" value="dUTPase_trimeric"/>
</dbReference>
<dbReference type="NCBIfam" id="TIGR00576">
    <property type="entry name" value="dut"/>
    <property type="match status" value="1"/>
</dbReference>
<dbReference type="NCBIfam" id="NF001862">
    <property type="entry name" value="PRK00601.1"/>
    <property type="match status" value="1"/>
</dbReference>
<dbReference type="PANTHER" id="PTHR11241">
    <property type="entry name" value="DEOXYURIDINE 5'-TRIPHOSPHATE NUCLEOTIDOHYDROLASE"/>
    <property type="match status" value="1"/>
</dbReference>
<dbReference type="PANTHER" id="PTHR11241:SF0">
    <property type="entry name" value="DEOXYURIDINE 5'-TRIPHOSPHATE NUCLEOTIDOHYDROLASE"/>
    <property type="match status" value="1"/>
</dbReference>
<dbReference type="Pfam" id="PF00692">
    <property type="entry name" value="dUTPase"/>
    <property type="match status" value="1"/>
</dbReference>
<dbReference type="SUPFAM" id="SSF51283">
    <property type="entry name" value="dUTPase-like"/>
    <property type="match status" value="1"/>
</dbReference>
<keyword id="KW-0378">Hydrolase</keyword>
<keyword id="KW-0460">Magnesium</keyword>
<keyword id="KW-0479">Metal-binding</keyword>
<keyword id="KW-0546">Nucleotide metabolism</keyword>
<accession>Q66GD8</accession>
<reference key="1">
    <citation type="journal article" date="2004" name="Proc. Natl. Acad. Sci. U.S.A.">
        <title>Insights into the evolution of Yersinia pestis through whole-genome comparison with Yersinia pseudotuberculosis.</title>
        <authorList>
            <person name="Chain P.S.G."/>
            <person name="Carniel E."/>
            <person name="Larimer F.W."/>
            <person name="Lamerdin J."/>
            <person name="Stoutland P.O."/>
            <person name="Regala W.M."/>
            <person name="Georgescu A.M."/>
            <person name="Vergez L.M."/>
            <person name="Land M.L."/>
            <person name="Motin V.L."/>
            <person name="Brubaker R.R."/>
            <person name="Fowler J."/>
            <person name="Hinnebusch J."/>
            <person name="Marceau M."/>
            <person name="Medigue C."/>
            <person name="Simonet M."/>
            <person name="Chenal-Francisque V."/>
            <person name="Souza B."/>
            <person name="Dacheux D."/>
            <person name="Elliott J.M."/>
            <person name="Derbise A."/>
            <person name="Hauser L.J."/>
            <person name="Garcia E."/>
        </authorList>
    </citation>
    <scope>NUCLEOTIDE SEQUENCE [LARGE SCALE GENOMIC DNA]</scope>
    <source>
        <strain>IP32953</strain>
    </source>
</reference>